<gene>
    <name evidence="1" type="primary">sfsA</name>
    <name type="ordered locus">plu0877</name>
</gene>
<dbReference type="EMBL" id="BX571861">
    <property type="protein sequence ID" value="CAE13172.1"/>
    <property type="molecule type" value="Genomic_DNA"/>
</dbReference>
<dbReference type="RefSeq" id="WP_011145245.1">
    <property type="nucleotide sequence ID" value="NC_005126.1"/>
</dbReference>
<dbReference type="SMR" id="Q7N864"/>
<dbReference type="STRING" id="243265.plu0877"/>
<dbReference type="GeneID" id="48847166"/>
<dbReference type="KEGG" id="plu:plu0877"/>
<dbReference type="eggNOG" id="COG1489">
    <property type="taxonomic scope" value="Bacteria"/>
</dbReference>
<dbReference type="HOGENOM" id="CLU_052299_2_0_6"/>
<dbReference type="OrthoDB" id="9802365at2"/>
<dbReference type="Proteomes" id="UP000002514">
    <property type="component" value="Chromosome"/>
</dbReference>
<dbReference type="GO" id="GO:0003677">
    <property type="term" value="F:DNA binding"/>
    <property type="evidence" value="ECO:0007669"/>
    <property type="project" value="InterPro"/>
</dbReference>
<dbReference type="CDD" id="cd22359">
    <property type="entry name" value="SfsA-like_bacterial"/>
    <property type="match status" value="1"/>
</dbReference>
<dbReference type="FunFam" id="2.40.50.580:FF:000001">
    <property type="entry name" value="Sugar fermentation stimulation protein A"/>
    <property type="match status" value="1"/>
</dbReference>
<dbReference type="FunFam" id="3.40.1350.60:FF:000001">
    <property type="entry name" value="Sugar fermentation stimulation protein A"/>
    <property type="match status" value="1"/>
</dbReference>
<dbReference type="Gene3D" id="2.40.50.580">
    <property type="match status" value="1"/>
</dbReference>
<dbReference type="Gene3D" id="3.40.1350.60">
    <property type="match status" value="1"/>
</dbReference>
<dbReference type="HAMAP" id="MF_00095">
    <property type="entry name" value="SfsA"/>
    <property type="match status" value="1"/>
</dbReference>
<dbReference type="InterPro" id="IPR005224">
    <property type="entry name" value="SfsA"/>
</dbReference>
<dbReference type="InterPro" id="IPR040452">
    <property type="entry name" value="SfsA_C"/>
</dbReference>
<dbReference type="InterPro" id="IPR041465">
    <property type="entry name" value="SfsA_N"/>
</dbReference>
<dbReference type="NCBIfam" id="TIGR00230">
    <property type="entry name" value="sfsA"/>
    <property type="match status" value="1"/>
</dbReference>
<dbReference type="PANTHER" id="PTHR30545">
    <property type="entry name" value="SUGAR FERMENTATION STIMULATION PROTEIN A"/>
    <property type="match status" value="1"/>
</dbReference>
<dbReference type="PANTHER" id="PTHR30545:SF2">
    <property type="entry name" value="SUGAR FERMENTATION STIMULATION PROTEIN A"/>
    <property type="match status" value="1"/>
</dbReference>
<dbReference type="Pfam" id="PF03749">
    <property type="entry name" value="SfsA"/>
    <property type="match status" value="1"/>
</dbReference>
<dbReference type="Pfam" id="PF17746">
    <property type="entry name" value="SfsA_N"/>
    <property type="match status" value="1"/>
</dbReference>
<comment type="similarity">
    <text evidence="1">Belongs to the SfsA family.</text>
</comment>
<organism>
    <name type="scientific">Photorhabdus laumondii subsp. laumondii (strain DSM 15139 / CIP 105565 / TT01)</name>
    <name type="common">Photorhabdus luminescens subsp. laumondii</name>
    <dbReference type="NCBI Taxonomy" id="243265"/>
    <lineage>
        <taxon>Bacteria</taxon>
        <taxon>Pseudomonadati</taxon>
        <taxon>Pseudomonadota</taxon>
        <taxon>Gammaproteobacteria</taxon>
        <taxon>Enterobacterales</taxon>
        <taxon>Morganellaceae</taxon>
        <taxon>Photorhabdus</taxon>
    </lineage>
</organism>
<protein>
    <recommendedName>
        <fullName evidence="1">Sugar fermentation stimulation protein homolog</fullName>
    </recommendedName>
</protein>
<feature type="chain" id="PRO_0000152293" description="Sugar fermentation stimulation protein homolog">
    <location>
        <begin position="1"/>
        <end position="235"/>
    </location>
</feature>
<name>SFSA_PHOLL</name>
<keyword id="KW-1185">Reference proteome</keyword>
<reference key="1">
    <citation type="journal article" date="2003" name="Nat. Biotechnol.">
        <title>The genome sequence of the entomopathogenic bacterium Photorhabdus luminescens.</title>
        <authorList>
            <person name="Duchaud E."/>
            <person name="Rusniok C."/>
            <person name="Frangeul L."/>
            <person name="Buchrieser C."/>
            <person name="Givaudan A."/>
            <person name="Taourit S."/>
            <person name="Bocs S."/>
            <person name="Boursaux-Eude C."/>
            <person name="Chandler M."/>
            <person name="Charles J.-F."/>
            <person name="Dassa E."/>
            <person name="Derose R."/>
            <person name="Derzelle S."/>
            <person name="Freyssinet G."/>
            <person name="Gaudriault S."/>
            <person name="Medigue C."/>
            <person name="Lanois A."/>
            <person name="Powell K."/>
            <person name="Siguier P."/>
            <person name="Vincent R."/>
            <person name="Wingate V."/>
            <person name="Zouine M."/>
            <person name="Glaser P."/>
            <person name="Boemare N."/>
            <person name="Danchin A."/>
            <person name="Kunst F."/>
        </authorList>
    </citation>
    <scope>NUCLEOTIDE SEQUENCE [LARGE SCALE GENOMIC DNA]</scope>
    <source>
        <strain>DSM 15139 / CIP 105565 / TT01</strain>
    </source>
</reference>
<evidence type="ECO:0000255" key="1">
    <source>
        <dbReference type="HAMAP-Rule" id="MF_00095"/>
    </source>
</evidence>
<proteinExistence type="inferred from homology"/>
<sequence>MEFHPPLQSATLIRRYKRFLADVITPEGETLTIHCANTGAMTGCATPGDTVWYSTSDNPKRKYPNSWELTETPAGHWICVNTLRANDLVAEAIAQNAIPEFSEYKKISREVKYGEENSRIDLLLQAEQQVNCYIEVKSVTLLQENCGYFPDAVTTRGQKHLRELQHIAEQGQRAVLFFAVLHSGINQVAAAAHIDHNYSSLLEQAQNSGVEVICYQANMTGKGMVLGDKLTFLLK</sequence>
<accession>Q7N864</accession>